<comment type="function">
    <text evidence="1">Catalyzes the reversible reaction in which hydroxymethyl group from 5,10-methylenetetrahydrofolate is transferred onto alpha-ketoisovalerate to form ketopantoate.</text>
</comment>
<comment type="catalytic activity">
    <reaction evidence="1">
        <text>3-methyl-2-oxobutanoate + (6R)-5,10-methylene-5,6,7,8-tetrahydrofolate + H2O = 2-dehydropantoate + (6S)-5,6,7,8-tetrahydrofolate</text>
        <dbReference type="Rhea" id="RHEA:11824"/>
        <dbReference type="ChEBI" id="CHEBI:11561"/>
        <dbReference type="ChEBI" id="CHEBI:11851"/>
        <dbReference type="ChEBI" id="CHEBI:15377"/>
        <dbReference type="ChEBI" id="CHEBI:15636"/>
        <dbReference type="ChEBI" id="CHEBI:57453"/>
        <dbReference type="EC" id="2.1.2.11"/>
    </reaction>
</comment>
<comment type="cofactor">
    <cofactor evidence="1">
        <name>Mg(2+)</name>
        <dbReference type="ChEBI" id="CHEBI:18420"/>
    </cofactor>
    <text evidence="1">Binds 1 Mg(2+) ion per subunit.</text>
</comment>
<comment type="pathway">
    <text evidence="1">Cofactor biosynthesis; (R)-pantothenate biosynthesis; (R)-pantoate from 3-methyl-2-oxobutanoate: step 1/2.</text>
</comment>
<comment type="subunit">
    <text evidence="1">Homodecamer; pentamer of dimers.</text>
</comment>
<comment type="subcellular location">
    <subcellularLocation>
        <location evidence="1">Cytoplasm</location>
    </subcellularLocation>
</comment>
<comment type="similarity">
    <text evidence="1">Belongs to the PanB family.</text>
</comment>
<name>PANB_CAMC1</name>
<evidence type="ECO:0000255" key="1">
    <source>
        <dbReference type="HAMAP-Rule" id="MF_00156"/>
    </source>
</evidence>
<feature type="chain" id="PRO_1000118118" description="3-methyl-2-oxobutanoate hydroxymethyltransferase">
    <location>
        <begin position="1"/>
        <end position="271"/>
    </location>
</feature>
<feature type="active site" description="Proton acceptor" evidence="1">
    <location>
        <position position="187"/>
    </location>
</feature>
<feature type="binding site" evidence="1">
    <location>
        <begin position="50"/>
        <end position="51"/>
    </location>
    <ligand>
        <name>3-methyl-2-oxobutanoate</name>
        <dbReference type="ChEBI" id="CHEBI:11851"/>
    </ligand>
</feature>
<feature type="binding site" evidence="1">
    <location>
        <position position="50"/>
    </location>
    <ligand>
        <name>Mg(2+)</name>
        <dbReference type="ChEBI" id="CHEBI:18420"/>
    </ligand>
</feature>
<feature type="binding site" evidence="1">
    <location>
        <position position="89"/>
    </location>
    <ligand>
        <name>3-methyl-2-oxobutanoate</name>
        <dbReference type="ChEBI" id="CHEBI:11851"/>
    </ligand>
</feature>
<feature type="binding site" evidence="1">
    <location>
        <position position="89"/>
    </location>
    <ligand>
        <name>Mg(2+)</name>
        <dbReference type="ChEBI" id="CHEBI:18420"/>
    </ligand>
</feature>
<feature type="binding site" evidence="1">
    <location>
        <position position="118"/>
    </location>
    <ligand>
        <name>3-methyl-2-oxobutanoate</name>
        <dbReference type="ChEBI" id="CHEBI:11851"/>
    </ligand>
</feature>
<feature type="binding site" evidence="1">
    <location>
        <position position="120"/>
    </location>
    <ligand>
        <name>Mg(2+)</name>
        <dbReference type="ChEBI" id="CHEBI:18420"/>
    </ligand>
</feature>
<protein>
    <recommendedName>
        <fullName evidence="1">3-methyl-2-oxobutanoate hydroxymethyltransferase</fullName>
        <ecNumber evidence="1">2.1.2.11</ecNumber>
    </recommendedName>
    <alternativeName>
        <fullName evidence="1">Ketopantoate hydroxymethyltransferase</fullName>
        <shortName evidence="1">KPHMT</shortName>
    </alternativeName>
</protein>
<sequence>MKDEKIAKKKLTINDIKNKKGAEPIVMITAYDALFAKIFDDYADVILVGDSLNMSFNMKESTLSADMSTMLYHTKAVCTGAKKSFILADMPFGSYTNEKQAIKNAMKFFKQTNADAVKLEVGMHQVNLVKRLCEEGINVMAHIGLKPQFFKFEGGYKIKGKSELEAKRLVEEALAFEQAGAFGILLEGTLSNVASEITRQVRVPVVGIGSGADVDGQVLVWSDMLGFFEDFKPKFVKRYLDGAALVRKGVQSYASEVKNKIFPSEEFSYKG</sequence>
<dbReference type="EC" id="2.1.2.11" evidence="1"/>
<dbReference type="EMBL" id="CP000792">
    <property type="protein sequence ID" value="EAT99367.1"/>
    <property type="molecule type" value="Genomic_DNA"/>
</dbReference>
<dbReference type="RefSeq" id="WP_012140124.1">
    <property type="nucleotide sequence ID" value="NC_009802.2"/>
</dbReference>
<dbReference type="SMR" id="A7ZEL6"/>
<dbReference type="STRING" id="360104.CCC13826_0378"/>
<dbReference type="KEGG" id="cco:CCC13826_0378"/>
<dbReference type="eggNOG" id="COG0413">
    <property type="taxonomic scope" value="Bacteria"/>
</dbReference>
<dbReference type="HOGENOM" id="CLU_036645_1_0_7"/>
<dbReference type="OrthoDB" id="9781789at2"/>
<dbReference type="UniPathway" id="UPA00028">
    <property type="reaction ID" value="UER00003"/>
</dbReference>
<dbReference type="Proteomes" id="UP000001121">
    <property type="component" value="Chromosome"/>
</dbReference>
<dbReference type="GO" id="GO:0005737">
    <property type="term" value="C:cytoplasm"/>
    <property type="evidence" value="ECO:0007669"/>
    <property type="project" value="UniProtKB-SubCell"/>
</dbReference>
<dbReference type="GO" id="GO:0003864">
    <property type="term" value="F:3-methyl-2-oxobutanoate hydroxymethyltransferase activity"/>
    <property type="evidence" value="ECO:0007669"/>
    <property type="project" value="UniProtKB-UniRule"/>
</dbReference>
<dbReference type="GO" id="GO:0000287">
    <property type="term" value="F:magnesium ion binding"/>
    <property type="evidence" value="ECO:0007669"/>
    <property type="project" value="TreeGrafter"/>
</dbReference>
<dbReference type="GO" id="GO:0015940">
    <property type="term" value="P:pantothenate biosynthetic process"/>
    <property type="evidence" value="ECO:0007669"/>
    <property type="project" value="UniProtKB-UniRule"/>
</dbReference>
<dbReference type="CDD" id="cd06557">
    <property type="entry name" value="KPHMT-like"/>
    <property type="match status" value="1"/>
</dbReference>
<dbReference type="FunFam" id="3.20.20.60:FF:000003">
    <property type="entry name" value="3-methyl-2-oxobutanoate hydroxymethyltransferase"/>
    <property type="match status" value="1"/>
</dbReference>
<dbReference type="Gene3D" id="3.20.20.60">
    <property type="entry name" value="Phosphoenolpyruvate-binding domains"/>
    <property type="match status" value="1"/>
</dbReference>
<dbReference type="HAMAP" id="MF_00156">
    <property type="entry name" value="PanB"/>
    <property type="match status" value="1"/>
</dbReference>
<dbReference type="InterPro" id="IPR003700">
    <property type="entry name" value="Pantoate_hydroxy_MeTrfase"/>
</dbReference>
<dbReference type="InterPro" id="IPR015813">
    <property type="entry name" value="Pyrv/PenolPyrv_kinase-like_dom"/>
</dbReference>
<dbReference type="InterPro" id="IPR040442">
    <property type="entry name" value="Pyrv_kinase-like_dom_sf"/>
</dbReference>
<dbReference type="NCBIfam" id="TIGR00222">
    <property type="entry name" value="panB"/>
    <property type="match status" value="1"/>
</dbReference>
<dbReference type="NCBIfam" id="NF001452">
    <property type="entry name" value="PRK00311.1"/>
    <property type="match status" value="1"/>
</dbReference>
<dbReference type="PANTHER" id="PTHR20881">
    <property type="entry name" value="3-METHYL-2-OXOBUTANOATE HYDROXYMETHYLTRANSFERASE"/>
    <property type="match status" value="1"/>
</dbReference>
<dbReference type="PANTHER" id="PTHR20881:SF0">
    <property type="entry name" value="3-METHYL-2-OXOBUTANOATE HYDROXYMETHYLTRANSFERASE"/>
    <property type="match status" value="1"/>
</dbReference>
<dbReference type="Pfam" id="PF02548">
    <property type="entry name" value="Pantoate_transf"/>
    <property type="match status" value="1"/>
</dbReference>
<dbReference type="PIRSF" id="PIRSF000388">
    <property type="entry name" value="Pantoate_hydroxy_MeTrfase"/>
    <property type="match status" value="1"/>
</dbReference>
<dbReference type="SUPFAM" id="SSF51621">
    <property type="entry name" value="Phosphoenolpyruvate/pyruvate domain"/>
    <property type="match status" value="1"/>
</dbReference>
<proteinExistence type="inferred from homology"/>
<gene>
    <name evidence="1" type="primary">panB</name>
    <name type="ordered locus">Ccon26_13760</name>
    <name type="ORF">CCC13826_0378</name>
</gene>
<accession>A7ZEL6</accession>
<organism>
    <name type="scientific">Campylobacter concisus (strain 13826)</name>
    <dbReference type="NCBI Taxonomy" id="360104"/>
    <lineage>
        <taxon>Bacteria</taxon>
        <taxon>Pseudomonadati</taxon>
        <taxon>Campylobacterota</taxon>
        <taxon>Epsilonproteobacteria</taxon>
        <taxon>Campylobacterales</taxon>
        <taxon>Campylobacteraceae</taxon>
        <taxon>Campylobacter</taxon>
    </lineage>
</organism>
<keyword id="KW-0963">Cytoplasm</keyword>
<keyword id="KW-0460">Magnesium</keyword>
<keyword id="KW-0479">Metal-binding</keyword>
<keyword id="KW-0566">Pantothenate biosynthesis</keyword>
<keyword id="KW-0808">Transferase</keyword>
<reference key="1">
    <citation type="submission" date="2007-10" db="EMBL/GenBank/DDBJ databases">
        <title>Genome sequence of Campylobacter concisus 13826 isolated from human feces.</title>
        <authorList>
            <person name="Fouts D.E."/>
            <person name="Mongodin E.F."/>
            <person name="Puiu D."/>
            <person name="Sebastian Y."/>
            <person name="Miller W.G."/>
            <person name="Mandrell R.E."/>
            <person name="On S."/>
            <person name="Nelson K.E."/>
        </authorList>
    </citation>
    <scope>NUCLEOTIDE SEQUENCE [LARGE SCALE GENOMIC DNA]</scope>
    <source>
        <strain>13826</strain>
    </source>
</reference>